<evidence type="ECO:0000255" key="1">
    <source>
        <dbReference type="HAMAP-Rule" id="MF_01012"/>
    </source>
</evidence>
<dbReference type="EC" id="2.1.1.189" evidence="1"/>
<dbReference type="EMBL" id="CP001063">
    <property type="protein sequence ID" value="ACD07182.1"/>
    <property type="molecule type" value="Genomic_DNA"/>
</dbReference>
<dbReference type="RefSeq" id="WP_001149686.1">
    <property type="nucleotide sequence ID" value="NC_010658.1"/>
</dbReference>
<dbReference type="SMR" id="B2TUM0"/>
<dbReference type="STRING" id="344609.SbBS512_E2472"/>
<dbReference type="KEGG" id="sbc:SbBS512_E2472"/>
<dbReference type="HOGENOM" id="CLU_014689_0_0_6"/>
<dbReference type="Proteomes" id="UP000001030">
    <property type="component" value="Chromosome"/>
</dbReference>
<dbReference type="GO" id="GO:0051539">
    <property type="term" value="F:4 iron, 4 sulfur cluster binding"/>
    <property type="evidence" value="ECO:0007669"/>
    <property type="project" value="UniProtKB-KW"/>
</dbReference>
<dbReference type="GO" id="GO:0005506">
    <property type="term" value="F:iron ion binding"/>
    <property type="evidence" value="ECO:0007669"/>
    <property type="project" value="UniProtKB-UniRule"/>
</dbReference>
<dbReference type="GO" id="GO:0070041">
    <property type="term" value="F:rRNA (uridine-C5-)-methyltransferase activity"/>
    <property type="evidence" value="ECO:0007669"/>
    <property type="project" value="UniProtKB-UniRule"/>
</dbReference>
<dbReference type="GO" id="GO:0070475">
    <property type="term" value="P:rRNA base methylation"/>
    <property type="evidence" value="ECO:0007669"/>
    <property type="project" value="TreeGrafter"/>
</dbReference>
<dbReference type="CDD" id="cd02440">
    <property type="entry name" value="AdoMet_MTases"/>
    <property type="match status" value="1"/>
</dbReference>
<dbReference type="FunFam" id="2.40.50.1070:FF:000002">
    <property type="entry name" value="23S rRNA (uracil(747)-C(5))-methyltransferase RlmC"/>
    <property type="match status" value="1"/>
</dbReference>
<dbReference type="FunFam" id="3.40.50.150:FF:000049">
    <property type="entry name" value="23S rRNA (uracil(747)-C(5))-methyltransferase RlmC"/>
    <property type="match status" value="1"/>
</dbReference>
<dbReference type="Gene3D" id="2.40.50.1070">
    <property type="match status" value="1"/>
</dbReference>
<dbReference type="Gene3D" id="3.40.50.150">
    <property type="entry name" value="Vaccinia Virus protein VP39"/>
    <property type="match status" value="1"/>
</dbReference>
<dbReference type="HAMAP" id="MF_01012">
    <property type="entry name" value="23SrRNA_methyltr_RlmC"/>
    <property type="match status" value="1"/>
</dbReference>
<dbReference type="InterPro" id="IPR011825">
    <property type="entry name" value="23SrRNA_MeTrfase_RlmC"/>
</dbReference>
<dbReference type="InterPro" id="IPR030390">
    <property type="entry name" value="MeTrfase_TrmA_AS"/>
</dbReference>
<dbReference type="InterPro" id="IPR030391">
    <property type="entry name" value="MeTrfase_TrmA_CS"/>
</dbReference>
<dbReference type="InterPro" id="IPR029063">
    <property type="entry name" value="SAM-dependent_MTases_sf"/>
</dbReference>
<dbReference type="InterPro" id="IPR010280">
    <property type="entry name" value="U5_MeTrfase_fam"/>
</dbReference>
<dbReference type="NCBIfam" id="TIGR02085">
    <property type="entry name" value="meth_trns_rumB"/>
    <property type="match status" value="1"/>
</dbReference>
<dbReference type="PANTHER" id="PTHR11061">
    <property type="entry name" value="RNA M5U METHYLTRANSFERASE"/>
    <property type="match status" value="1"/>
</dbReference>
<dbReference type="PANTHER" id="PTHR11061:SF30">
    <property type="entry name" value="TRNA (URACIL(54)-C(5))-METHYLTRANSFERASE"/>
    <property type="match status" value="1"/>
</dbReference>
<dbReference type="Pfam" id="PF05958">
    <property type="entry name" value="tRNA_U5-meth_tr"/>
    <property type="match status" value="1"/>
</dbReference>
<dbReference type="SUPFAM" id="SSF53335">
    <property type="entry name" value="S-adenosyl-L-methionine-dependent methyltransferases"/>
    <property type="match status" value="1"/>
</dbReference>
<dbReference type="PROSITE" id="PS51687">
    <property type="entry name" value="SAM_MT_RNA_M5U"/>
    <property type="match status" value="1"/>
</dbReference>
<dbReference type="PROSITE" id="PS01230">
    <property type="entry name" value="TRMA_1"/>
    <property type="match status" value="1"/>
</dbReference>
<dbReference type="PROSITE" id="PS01231">
    <property type="entry name" value="TRMA_2"/>
    <property type="match status" value="1"/>
</dbReference>
<keyword id="KW-0004">4Fe-4S</keyword>
<keyword id="KW-0408">Iron</keyword>
<keyword id="KW-0411">Iron-sulfur</keyword>
<keyword id="KW-0479">Metal-binding</keyword>
<keyword id="KW-0489">Methyltransferase</keyword>
<keyword id="KW-1185">Reference proteome</keyword>
<keyword id="KW-0698">rRNA processing</keyword>
<keyword id="KW-0949">S-adenosyl-L-methionine</keyword>
<keyword id="KW-0808">Transferase</keyword>
<sequence>MQCALYDAGRCRSCQWITQLIPEQLSAKTADLKNLLADFPVEEWCAPVSGPEQGFRNKAKMVVSGSVEKPLLGMLHRDGTPEDLCDCPLYPASFAPVFAALKPFIACAGLTPYNVARKRGELKYILLTESQSDGGMMLRFVLRSETKLAQLRKALPWLQEQLPQLKVITVNIQPVHMAIMEGETEIYLTEQQALAERFNDVPLWIRPQSFFQTNPAVASQLYATVRDWVRQLPVKHMWDLFCGVGGFGLHCATPDMQLTGIEIAPEAIACAKQSAAELGLTRLQFQALDSTQFATAQGEVQELVLVNPPRRGIGKPLCDYLSTMAPRFIIYSSCNAQTMAKDIRELPGFRIERVQLFDMFPHTAHYEVLTLLVKQ</sequence>
<organism>
    <name type="scientific">Shigella boydii serotype 18 (strain CDC 3083-94 / BS512)</name>
    <dbReference type="NCBI Taxonomy" id="344609"/>
    <lineage>
        <taxon>Bacteria</taxon>
        <taxon>Pseudomonadati</taxon>
        <taxon>Pseudomonadota</taxon>
        <taxon>Gammaproteobacteria</taxon>
        <taxon>Enterobacterales</taxon>
        <taxon>Enterobacteriaceae</taxon>
        <taxon>Shigella</taxon>
    </lineage>
</organism>
<comment type="function">
    <text evidence="1">Catalyzes the formation of 5-methyl-uridine at position 747 (m5U747) in 23S rRNA.</text>
</comment>
<comment type="catalytic activity">
    <reaction evidence="1">
        <text>uridine(747) in 23S rRNA + S-adenosyl-L-methionine = 5-methyluridine(747) in 23S rRNA + S-adenosyl-L-homocysteine + H(+)</text>
        <dbReference type="Rhea" id="RHEA:42628"/>
        <dbReference type="Rhea" id="RHEA-COMP:10154"/>
        <dbReference type="Rhea" id="RHEA-COMP:10155"/>
        <dbReference type="ChEBI" id="CHEBI:15378"/>
        <dbReference type="ChEBI" id="CHEBI:57856"/>
        <dbReference type="ChEBI" id="CHEBI:59789"/>
        <dbReference type="ChEBI" id="CHEBI:65315"/>
        <dbReference type="ChEBI" id="CHEBI:74447"/>
        <dbReference type="EC" id="2.1.1.189"/>
    </reaction>
</comment>
<comment type="similarity">
    <text evidence="1">Belongs to the class I-like SAM-binding methyltransferase superfamily. RNA M5U methyltransferase family. RlmC subfamily.</text>
</comment>
<proteinExistence type="inferred from homology"/>
<feature type="chain" id="PRO_1000200877" description="23S rRNA (uracil(747)-C(5))-methyltransferase RlmC">
    <location>
        <begin position="1"/>
        <end position="375"/>
    </location>
</feature>
<feature type="active site" description="Nucleophile" evidence="1">
    <location>
        <position position="334"/>
    </location>
</feature>
<feature type="binding site" evidence="1">
    <location>
        <position position="3"/>
    </location>
    <ligand>
        <name>[4Fe-4S] cluster</name>
        <dbReference type="ChEBI" id="CHEBI:49883"/>
    </ligand>
</feature>
<feature type="binding site" evidence="1">
    <location>
        <position position="11"/>
    </location>
    <ligand>
        <name>[4Fe-4S] cluster</name>
        <dbReference type="ChEBI" id="CHEBI:49883"/>
    </ligand>
</feature>
<feature type="binding site" evidence="1">
    <location>
        <position position="14"/>
    </location>
    <ligand>
        <name>[4Fe-4S] cluster</name>
        <dbReference type="ChEBI" id="CHEBI:49883"/>
    </ligand>
</feature>
<feature type="binding site" evidence="1">
    <location>
        <position position="87"/>
    </location>
    <ligand>
        <name>[4Fe-4S] cluster</name>
        <dbReference type="ChEBI" id="CHEBI:49883"/>
    </ligand>
</feature>
<feature type="binding site" evidence="1">
    <location>
        <position position="212"/>
    </location>
    <ligand>
        <name>S-adenosyl-L-methionine</name>
        <dbReference type="ChEBI" id="CHEBI:59789"/>
    </ligand>
</feature>
<feature type="binding site" evidence="1">
    <location>
        <position position="241"/>
    </location>
    <ligand>
        <name>S-adenosyl-L-methionine</name>
        <dbReference type="ChEBI" id="CHEBI:59789"/>
    </ligand>
</feature>
<feature type="binding site" evidence="1">
    <location>
        <position position="262"/>
    </location>
    <ligand>
        <name>S-adenosyl-L-methionine</name>
        <dbReference type="ChEBI" id="CHEBI:59789"/>
    </ligand>
</feature>
<feature type="binding site" evidence="1">
    <location>
        <position position="307"/>
    </location>
    <ligand>
        <name>S-adenosyl-L-methionine</name>
        <dbReference type="ChEBI" id="CHEBI:59789"/>
    </ligand>
</feature>
<protein>
    <recommendedName>
        <fullName evidence="1">23S rRNA (uracil(747)-C(5))-methyltransferase RlmC</fullName>
        <ecNumber evidence="1">2.1.1.189</ecNumber>
    </recommendedName>
    <alternativeName>
        <fullName evidence="1">23S rRNA(m5U747)-methyltransferase</fullName>
    </alternativeName>
</protein>
<accession>B2TUM0</accession>
<gene>
    <name evidence="1" type="primary">rlmC</name>
    <name type="synonym">rumB</name>
    <name type="ordered locus">SbBS512_E2472</name>
</gene>
<reference key="1">
    <citation type="submission" date="2008-05" db="EMBL/GenBank/DDBJ databases">
        <title>Complete sequence of Shigella boydii serotype 18 strain BS512.</title>
        <authorList>
            <person name="Rasko D.A."/>
            <person name="Rosovitz M."/>
            <person name="Maurelli A.T."/>
            <person name="Myers G."/>
            <person name="Seshadri R."/>
            <person name="Cer R."/>
            <person name="Jiang L."/>
            <person name="Ravel J."/>
            <person name="Sebastian Y."/>
        </authorList>
    </citation>
    <scope>NUCLEOTIDE SEQUENCE [LARGE SCALE GENOMIC DNA]</scope>
    <source>
        <strain>CDC 3083-94 / BS512</strain>
    </source>
</reference>
<name>RLMC_SHIB3</name>